<dbReference type="EMBL" id="KE383842">
    <property type="status" value="NOT_ANNOTATED_CDS"/>
    <property type="molecule type" value="Genomic_DNA"/>
</dbReference>
<dbReference type="SMR" id="P0DTL2"/>
<dbReference type="GO" id="GO:0016787">
    <property type="term" value="F:hydrolase activity"/>
    <property type="evidence" value="ECO:0007669"/>
    <property type="project" value="UniProtKB-KW"/>
</dbReference>
<dbReference type="GO" id="GO:0046872">
    <property type="term" value="F:metal ion binding"/>
    <property type="evidence" value="ECO:0007669"/>
    <property type="project" value="UniProtKB-KW"/>
</dbReference>
<dbReference type="Gene3D" id="3.60.15.10">
    <property type="entry name" value="Ribonuclease Z/Hydroxyacylglutathione hydrolase-like"/>
    <property type="match status" value="1"/>
</dbReference>
<dbReference type="InterPro" id="IPR056308">
    <property type="entry name" value="Anti-Pycsar_Apyc1"/>
</dbReference>
<dbReference type="InterPro" id="IPR001279">
    <property type="entry name" value="Metallo-B-lactamas"/>
</dbReference>
<dbReference type="InterPro" id="IPR036866">
    <property type="entry name" value="RibonucZ/Hydroxyglut_hydro"/>
</dbReference>
<dbReference type="PANTHER" id="PTHR42663:SF6">
    <property type="entry name" value="HYDROLASE C777.06C-RELATED"/>
    <property type="match status" value="1"/>
</dbReference>
<dbReference type="PANTHER" id="PTHR42663">
    <property type="entry name" value="HYDROLASE C777.06C-RELATED-RELATED"/>
    <property type="match status" value="1"/>
</dbReference>
<dbReference type="Pfam" id="PF23023">
    <property type="entry name" value="Anti-Pycsar_Apyc1"/>
    <property type="match status" value="1"/>
</dbReference>
<dbReference type="SMART" id="SM00849">
    <property type="entry name" value="Lactamase_B"/>
    <property type="match status" value="1"/>
</dbReference>
<dbReference type="SUPFAM" id="SSF56281">
    <property type="entry name" value="Metallo-hydrolase/oxidoreductase"/>
    <property type="match status" value="1"/>
</dbReference>
<keyword id="KW-0378">Hydrolase</keyword>
<keyword id="KW-0479">Metal-binding</keyword>
<keyword id="KW-0862">Zinc</keyword>
<evidence type="ECO:0000250" key="1">
    <source>
        <dbReference type="UniProtKB" id="A0A2W1NDJ7"/>
    </source>
</evidence>
<evidence type="ECO:0000250" key="2">
    <source>
        <dbReference type="UniProtKB" id="A0A345MJY6"/>
    </source>
</evidence>
<evidence type="ECO:0000250" key="3">
    <source>
        <dbReference type="UniProtKB" id="P0DTL1"/>
    </source>
</evidence>
<evidence type="ECO:0000269" key="4">
    <source>
    </source>
</evidence>
<evidence type="ECO:0000303" key="5">
    <source>
    </source>
</evidence>
<evidence type="ECO:0000305" key="6"/>
<comment type="function">
    <text evidence="4">Counteracts the endogenous Pycsar antiviral defense system. Phosphodiesterase that enables metal-dependent hydrolysis of host cyclic nucleotide Pycsar defense signals such as cCMP and cUMP.</text>
</comment>
<comment type="catalytic activity">
    <reaction evidence="4">
        <text>3',5'-cyclic CMP + H2O = CMP + H(+)</text>
        <dbReference type="Rhea" id="RHEA:72675"/>
        <dbReference type="ChEBI" id="CHEBI:15377"/>
        <dbReference type="ChEBI" id="CHEBI:15378"/>
        <dbReference type="ChEBI" id="CHEBI:58003"/>
        <dbReference type="ChEBI" id="CHEBI:60377"/>
    </reaction>
    <physiologicalReaction direction="left-to-right" evidence="4">
        <dbReference type="Rhea" id="RHEA:72676"/>
    </physiologicalReaction>
</comment>
<comment type="catalytic activity">
    <reaction evidence="4">
        <text>3',5'-cyclic UMP + H2O = UMP + H(+)</text>
        <dbReference type="Rhea" id="RHEA:70575"/>
        <dbReference type="ChEBI" id="CHEBI:15377"/>
        <dbReference type="ChEBI" id="CHEBI:15378"/>
        <dbReference type="ChEBI" id="CHEBI:57865"/>
        <dbReference type="ChEBI" id="CHEBI:184387"/>
    </reaction>
    <physiologicalReaction direction="left-to-right" evidence="4">
        <dbReference type="Rhea" id="RHEA:70576"/>
    </physiologicalReaction>
</comment>
<comment type="cofactor">
    <cofactor evidence="2">
        <name>Zn(2+)</name>
        <dbReference type="ChEBI" id="CHEBI:29105"/>
    </cofactor>
    <text evidence="2">Coordinates 2 Zn(2+) ions. One protomer coordinates the metal ions and the opposing protomer provides the catalytic residues required for cCMP hydrolysis.</text>
</comment>
<comment type="subunit">
    <text evidence="3">Homodimer.</text>
</comment>
<comment type="miscellaneous">
    <text evidence="4">This homolog of an antiviral immune evasion nuclease may be due to cryptic prophages, or it may play a role in regulating the endogenous antiviral defense system based on cyclic nucleotides.</text>
</comment>
<comment type="similarity">
    <text evidence="6">Belongs to the nuclease anti-Pycsar protein Apyc1 family.</text>
</comment>
<organism>
    <name type="scientific">Paenibacillus harenae</name>
    <dbReference type="NCBI Taxonomy" id="306543"/>
    <lineage>
        <taxon>Bacteria</taxon>
        <taxon>Bacillati</taxon>
        <taxon>Bacillota</taxon>
        <taxon>Bacilli</taxon>
        <taxon>Bacillales</taxon>
        <taxon>Paenibacillaceae</taxon>
        <taxon>Paenibacillus</taxon>
    </lineage>
</organism>
<protein>
    <recommendedName>
        <fullName evidence="5">Anti-Pycsar protein Apyc1</fullName>
        <shortName evidence="5">Apyc1</shortName>
    </recommendedName>
</protein>
<reference key="1">
    <citation type="submission" date="2013-07" db="EMBL/GenBank/DDBJ databases">
        <authorList>
            <person name="Kyrpides N."/>
            <person name="Huntemann M."/>
            <person name="Han J."/>
            <person name="Chen A."/>
            <person name="Mavromatis K."/>
            <person name="Markowitz V."/>
            <person name="Palaniappan K."/>
            <person name="Ivanova N."/>
            <person name="Schaumberg A."/>
            <person name="Pati A."/>
            <person name="Liolios K."/>
            <person name="Nordberg H.P."/>
            <person name="Cantor M.N."/>
            <person name="Hua S.X."/>
            <person name="Woyke T."/>
        </authorList>
    </citation>
    <scope>NUCLEOTIDE SEQUENCE [GENOMIC DNA]</scope>
</reference>
<reference key="2">
    <citation type="journal article" date="2022" name="Nature">
        <title>Phage anti-CBASS and anti-Pycsar nucleases subvert bacterial immunity.</title>
        <authorList>
            <person name="Hobbs S.J."/>
            <person name="Wein T."/>
            <person name="Lu A."/>
            <person name="Morehouse B.R."/>
            <person name="Schnabel J."/>
            <person name="Leavitt A."/>
            <person name="Yirmiya E."/>
            <person name="Sorek R."/>
            <person name="Kranzusch P.J."/>
        </authorList>
    </citation>
    <scope>FUNCTION</scope>
    <scope>CATALYTIC ACTIVITY</scope>
    <source>
        <strain>DSM 16969 / KCTC 3951 / B519</strain>
    </source>
</reference>
<proteinExistence type="evidence at protein level"/>
<accession>P0DTL2</accession>
<sequence length="241" mass="27676">MHIRMVGTGSAFAKKFDNNNALLEQDGCCLLIDCGITLPKALYQMGLAFPEIDAVLISHIHADHVGGLEEFAFQMMFKYNRKPVLFIADTLIEPLWEHTLRGGLTQDPLNKLEHFFDVRPIIANTETELFPGLRVKLLPTKHIPNKPSYSFLFNDRFFYSADMRFDKELLLRLADGGVQTIFHDCQLEEPGVVHASLNELLTLPESVQKKTWLMHYGDTIDQYQGRTGHMRIVEPQRRYEV</sequence>
<feature type="chain" id="PRO_0000456675" description="Anti-Pycsar protein Apyc1">
    <location>
        <begin position="1"/>
        <end position="241"/>
    </location>
</feature>
<feature type="region of interest" description="Beta-lactamase-like" evidence="2">
    <location>
        <begin position="17"/>
        <end position="215"/>
    </location>
</feature>
<feature type="binding site" evidence="2">
    <location>
        <position position="59"/>
    </location>
    <ligand>
        <name>Zn(2+)</name>
        <dbReference type="ChEBI" id="CHEBI:29105"/>
        <label>2</label>
    </ligand>
</feature>
<feature type="binding site" evidence="1">
    <location>
        <position position="61"/>
    </location>
    <ligand>
        <name>Zn(2+)</name>
        <dbReference type="ChEBI" id="CHEBI:29105"/>
        <label>2</label>
    </ligand>
</feature>
<feature type="binding site" evidence="3">
    <location>
        <position position="63"/>
    </location>
    <ligand>
        <name>Zn(2+)</name>
        <dbReference type="ChEBI" id="CHEBI:29105"/>
        <label>1</label>
    </ligand>
</feature>
<feature type="binding site" evidence="3">
    <location>
        <position position="64"/>
    </location>
    <ligand>
        <name>Zn(2+)</name>
        <dbReference type="ChEBI" id="CHEBI:29105"/>
        <label>1</label>
    </ligand>
</feature>
<feature type="binding site" evidence="2">
    <location>
        <position position="142"/>
    </location>
    <ligand>
        <name>Zn(2+)</name>
        <dbReference type="ChEBI" id="CHEBI:29105"/>
        <label>2</label>
    </ligand>
</feature>
<feature type="binding site" evidence="3">
    <location>
        <position position="162"/>
    </location>
    <ligand>
        <name>Zn(2+)</name>
        <dbReference type="ChEBI" id="CHEBI:29105"/>
        <label>1</label>
    </ligand>
</feature>
<feature type="binding site" evidence="3">
    <location>
        <position position="215"/>
    </location>
    <ligand>
        <name>Zn(2+)</name>
        <dbReference type="ChEBI" id="CHEBI:29105"/>
        <label>1</label>
    </ligand>
</feature>
<name>ACPY1_PAEHA</name>